<evidence type="ECO:0000250" key="1"/>
<evidence type="ECO:0000250" key="2">
    <source>
        <dbReference type="UniProtKB" id="Q9BZR9"/>
    </source>
</evidence>
<evidence type="ECO:0000255" key="3"/>
<evidence type="ECO:0000255" key="4">
    <source>
        <dbReference type="PROSITE-ProRule" id="PRU00175"/>
    </source>
</evidence>
<evidence type="ECO:0000256" key="5">
    <source>
        <dbReference type="SAM" id="MobiDB-lite"/>
    </source>
</evidence>
<evidence type="ECO:0000269" key="6">
    <source>
    </source>
</evidence>
<evidence type="ECO:0000269" key="7">
    <source>
    </source>
</evidence>
<evidence type="ECO:0000269" key="8">
    <source>
    </source>
</evidence>
<evidence type="ECO:0000269" key="9">
    <source>
    </source>
</evidence>
<evidence type="ECO:0000269" key="10">
    <source>
    </source>
</evidence>
<evidence type="ECO:0000305" key="11"/>
<name>TRIM8_MOUSE</name>
<protein>
    <recommendedName>
        <fullName>E3 ubiquitin-protein ligase TRIM8</fullName>
        <ecNumber>2.3.2.27</ecNumber>
    </recommendedName>
    <alternativeName>
        <fullName>Glioblastoma-expressed RING finger protein</fullName>
    </alternativeName>
    <alternativeName>
        <fullName>RING finger protein 27</fullName>
    </alternativeName>
    <alternativeName>
        <fullName evidence="11">RING-type E3 ubiquitin transferase TRIM8</fullName>
    </alternativeName>
    <alternativeName>
        <fullName>Tripartite motif-containing protein 8</fullName>
    </alternativeName>
</protein>
<organism>
    <name type="scientific">Mus musculus</name>
    <name type="common">Mouse</name>
    <dbReference type="NCBI Taxonomy" id="10090"/>
    <lineage>
        <taxon>Eukaryota</taxon>
        <taxon>Metazoa</taxon>
        <taxon>Chordata</taxon>
        <taxon>Craniata</taxon>
        <taxon>Vertebrata</taxon>
        <taxon>Euteleostomi</taxon>
        <taxon>Mammalia</taxon>
        <taxon>Eutheria</taxon>
        <taxon>Euarchontoglires</taxon>
        <taxon>Glires</taxon>
        <taxon>Rodentia</taxon>
        <taxon>Myomorpha</taxon>
        <taxon>Muroidea</taxon>
        <taxon>Muridae</taxon>
        <taxon>Murinae</taxon>
        <taxon>Mus</taxon>
        <taxon>Mus</taxon>
    </lineage>
</organism>
<proteinExistence type="evidence at protein level"/>
<comment type="function">
    <text evidence="2 7 9 10">E3 ubiquitin-protein ligase that participates in multiple biological processes including cell survival, differentiation, apoptosis, and in particular, the innate immune response (PubMed:28747347, PubMed:31360105). Participates in the activation of interferon-gamma signaling by promoting proteasomal degradation of the repressor SOCS1 (PubMed:12163497). Plays a positive role in the TNFalpha and IL-1beta signaling pathways. Mechanistically, induces the 'Lys-63'-linked polyubiquitination of MAP3K7/TAK1 component leading to the activation of NF-kappa-B (By similarity). Also modulates STAT3 activity through negative regulation of PIAS3, either by degradation of PIAS3 through the ubiquitin-proteasome pathway or exclusion of PIAS3 from the nucleus (By similarity). Negatively regulates TLR3/4-mediated innate immune response by catalyzing 'Lys-6'- and 'Lys-33'-linked polyubiquitination of TICAM1 and thereby disrupting the TICAM1-TBK1 interaction (PubMed:28747347).</text>
</comment>
<comment type="catalytic activity">
    <reaction>
        <text>S-ubiquitinyl-[E2 ubiquitin-conjugating enzyme]-L-cysteine + [acceptor protein]-L-lysine = [E2 ubiquitin-conjugating enzyme]-L-cysteine + N(6)-ubiquitinyl-[acceptor protein]-L-lysine.</text>
        <dbReference type="EC" id="2.3.2.27"/>
    </reaction>
</comment>
<comment type="pathway">
    <text>Protein modification; protein ubiquitination.</text>
</comment>
<comment type="subunit">
    <text evidence="2 7 8 9">Homodimer. Interacts with SOCS1 (via) SH2 domain and SOCS box. Interacts with HSP90AB1; prevents nucleus translocation of phosphorylated STAT3 and HSP90AB1 (PubMed:21689689). Interacts with MAP3K7/TAK1 (By similarity). Interacts with PIAS3 (By similarity). Interacts with TICAM1 (PubMed:28747347). Interacts with TRIM15; this interaction prevents TRIM8 cytoplasmic translocation (By similarity).</text>
</comment>
<comment type="tissue specificity">
    <text evidence="6 7">High expression in heart, liver, and thymus. Expressed in embryonic CNS, kidney, lens and gut.</text>
</comment>
<comment type="developmental stage">
    <text>At 10.5 and 12.5 dpc, expressed in the central nervous system. At 14.5 dpc, expressed in the eye (lens and inner neural layer of the retina), in the primitive glomeruli of the developing kidney, in the villi of the gut and in the dorsal root ganglia.</text>
</comment>
<comment type="domain">
    <text evidence="1">The coiled coil domain is required for homodimerization.</text>
</comment>
<comment type="domain">
    <text>The region immediately C-terminal to the RING motif is sufficient to mediate the interaction with SOCS1.</text>
</comment>
<comment type="disruption phenotype">
    <text evidence="9 10">Mice are more susceptible to LPS and bacterial-induced death (PubMed:28747347). In addition, TRIM8 deletion plays a protective role in hepatocyte injury triggered by hepatic ischaemia/reperfusion (I/R) injury (PubMed:31360105).</text>
</comment>
<comment type="similarity">
    <text evidence="11">Belongs to the TRIM/RBCC family.</text>
</comment>
<feature type="chain" id="PRO_0000056207" description="E3 ubiquitin-protein ligase TRIM8">
    <location>
        <begin position="1"/>
        <end position="551"/>
    </location>
</feature>
<feature type="zinc finger region" description="RING-type" evidence="4">
    <location>
        <begin position="15"/>
        <end position="56"/>
    </location>
</feature>
<feature type="zinc finger region" description="B box-type 1">
    <location>
        <begin position="92"/>
        <end position="132"/>
    </location>
</feature>
<feature type="zinc finger region" description="B box-type 2">
    <location>
        <begin position="140"/>
        <end position="182"/>
    </location>
</feature>
<feature type="region of interest" description="Disordered" evidence="5">
    <location>
        <begin position="399"/>
        <end position="457"/>
    </location>
</feature>
<feature type="coiled-coil region" evidence="3">
    <location>
        <begin position="181"/>
        <end position="249"/>
    </location>
</feature>
<feature type="coiled-coil region" evidence="3">
    <location>
        <begin position="274"/>
        <end position="295"/>
    </location>
</feature>
<feature type="compositionally biased region" description="Polar residues" evidence="5">
    <location>
        <begin position="405"/>
        <end position="424"/>
    </location>
</feature>
<feature type="compositionally biased region" description="Polar residues" evidence="5">
    <location>
        <begin position="446"/>
        <end position="456"/>
    </location>
</feature>
<feature type="sequence conflict" description="In Ref. 1; AAG53088 and 4; AAG53489." evidence="11" ref="1 4">
    <original>K</original>
    <variation>M</variation>
    <location>
        <position position="218"/>
    </location>
</feature>
<feature type="sequence conflict" description="In Ref. 1; AAG53088." evidence="11" ref="1">
    <original>A</original>
    <variation>G</variation>
    <location>
        <position position="259"/>
    </location>
</feature>
<gene>
    <name type="primary">Trim8</name>
    <name type="synonym">Gerp</name>
    <name type="synonym">Rnf27</name>
</gene>
<reference key="1">
    <citation type="journal article" date="2000" name="Biochem. Biophys. Res. Commun.">
        <title>A novel RING finger-B box-coiled-coil protein, GERP.</title>
        <authorList>
            <person name="Vincent S.R."/>
            <person name="Kwasnicka D.A."/>
            <person name="Fretier P."/>
        </authorList>
    </citation>
    <scope>NUCLEOTIDE SEQUENCE [MRNA]</scope>
    <source>
        <tissue>Brain</tissue>
    </source>
</reference>
<reference key="2">
    <citation type="journal article" date="2005" name="Science">
        <title>The transcriptional landscape of the mammalian genome.</title>
        <authorList>
            <person name="Carninci P."/>
            <person name="Kasukawa T."/>
            <person name="Katayama S."/>
            <person name="Gough J."/>
            <person name="Frith M.C."/>
            <person name="Maeda N."/>
            <person name="Oyama R."/>
            <person name="Ravasi T."/>
            <person name="Lenhard B."/>
            <person name="Wells C."/>
            <person name="Kodzius R."/>
            <person name="Shimokawa K."/>
            <person name="Bajic V.B."/>
            <person name="Brenner S.E."/>
            <person name="Batalov S."/>
            <person name="Forrest A.R."/>
            <person name="Zavolan M."/>
            <person name="Davis M.J."/>
            <person name="Wilming L.G."/>
            <person name="Aidinis V."/>
            <person name="Allen J.E."/>
            <person name="Ambesi-Impiombato A."/>
            <person name="Apweiler R."/>
            <person name="Aturaliya R.N."/>
            <person name="Bailey T.L."/>
            <person name="Bansal M."/>
            <person name="Baxter L."/>
            <person name="Beisel K.W."/>
            <person name="Bersano T."/>
            <person name="Bono H."/>
            <person name="Chalk A.M."/>
            <person name="Chiu K.P."/>
            <person name="Choudhary V."/>
            <person name="Christoffels A."/>
            <person name="Clutterbuck D.R."/>
            <person name="Crowe M.L."/>
            <person name="Dalla E."/>
            <person name="Dalrymple B.P."/>
            <person name="de Bono B."/>
            <person name="Della Gatta G."/>
            <person name="di Bernardo D."/>
            <person name="Down T."/>
            <person name="Engstrom P."/>
            <person name="Fagiolini M."/>
            <person name="Faulkner G."/>
            <person name="Fletcher C.F."/>
            <person name="Fukushima T."/>
            <person name="Furuno M."/>
            <person name="Futaki S."/>
            <person name="Gariboldi M."/>
            <person name="Georgii-Hemming P."/>
            <person name="Gingeras T.R."/>
            <person name="Gojobori T."/>
            <person name="Green R.E."/>
            <person name="Gustincich S."/>
            <person name="Harbers M."/>
            <person name="Hayashi Y."/>
            <person name="Hensch T.K."/>
            <person name="Hirokawa N."/>
            <person name="Hill D."/>
            <person name="Huminiecki L."/>
            <person name="Iacono M."/>
            <person name="Ikeo K."/>
            <person name="Iwama A."/>
            <person name="Ishikawa T."/>
            <person name="Jakt M."/>
            <person name="Kanapin A."/>
            <person name="Katoh M."/>
            <person name="Kawasawa Y."/>
            <person name="Kelso J."/>
            <person name="Kitamura H."/>
            <person name="Kitano H."/>
            <person name="Kollias G."/>
            <person name="Krishnan S.P."/>
            <person name="Kruger A."/>
            <person name="Kummerfeld S.K."/>
            <person name="Kurochkin I.V."/>
            <person name="Lareau L.F."/>
            <person name="Lazarevic D."/>
            <person name="Lipovich L."/>
            <person name="Liu J."/>
            <person name="Liuni S."/>
            <person name="McWilliam S."/>
            <person name="Madan Babu M."/>
            <person name="Madera M."/>
            <person name="Marchionni L."/>
            <person name="Matsuda H."/>
            <person name="Matsuzawa S."/>
            <person name="Miki H."/>
            <person name="Mignone F."/>
            <person name="Miyake S."/>
            <person name="Morris K."/>
            <person name="Mottagui-Tabar S."/>
            <person name="Mulder N."/>
            <person name="Nakano N."/>
            <person name="Nakauchi H."/>
            <person name="Ng P."/>
            <person name="Nilsson R."/>
            <person name="Nishiguchi S."/>
            <person name="Nishikawa S."/>
            <person name="Nori F."/>
            <person name="Ohara O."/>
            <person name="Okazaki Y."/>
            <person name="Orlando V."/>
            <person name="Pang K.C."/>
            <person name="Pavan W.J."/>
            <person name="Pavesi G."/>
            <person name="Pesole G."/>
            <person name="Petrovsky N."/>
            <person name="Piazza S."/>
            <person name="Reed J."/>
            <person name="Reid J.F."/>
            <person name="Ring B.Z."/>
            <person name="Ringwald M."/>
            <person name="Rost B."/>
            <person name="Ruan Y."/>
            <person name="Salzberg S.L."/>
            <person name="Sandelin A."/>
            <person name="Schneider C."/>
            <person name="Schoenbach C."/>
            <person name="Sekiguchi K."/>
            <person name="Semple C.A."/>
            <person name="Seno S."/>
            <person name="Sessa L."/>
            <person name="Sheng Y."/>
            <person name="Shibata Y."/>
            <person name="Shimada H."/>
            <person name="Shimada K."/>
            <person name="Silva D."/>
            <person name="Sinclair B."/>
            <person name="Sperling S."/>
            <person name="Stupka E."/>
            <person name="Sugiura K."/>
            <person name="Sultana R."/>
            <person name="Takenaka Y."/>
            <person name="Taki K."/>
            <person name="Tammoja K."/>
            <person name="Tan S.L."/>
            <person name="Tang S."/>
            <person name="Taylor M.S."/>
            <person name="Tegner J."/>
            <person name="Teichmann S.A."/>
            <person name="Ueda H.R."/>
            <person name="van Nimwegen E."/>
            <person name="Verardo R."/>
            <person name="Wei C.L."/>
            <person name="Yagi K."/>
            <person name="Yamanishi H."/>
            <person name="Zabarovsky E."/>
            <person name="Zhu S."/>
            <person name="Zimmer A."/>
            <person name="Hide W."/>
            <person name="Bult C."/>
            <person name="Grimmond S.M."/>
            <person name="Teasdale R.D."/>
            <person name="Liu E.T."/>
            <person name="Brusic V."/>
            <person name="Quackenbush J."/>
            <person name="Wahlestedt C."/>
            <person name="Mattick J.S."/>
            <person name="Hume D.A."/>
            <person name="Kai C."/>
            <person name="Sasaki D."/>
            <person name="Tomaru Y."/>
            <person name="Fukuda S."/>
            <person name="Kanamori-Katayama M."/>
            <person name="Suzuki M."/>
            <person name="Aoki J."/>
            <person name="Arakawa T."/>
            <person name="Iida J."/>
            <person name="Imamura K."/>
            <person name="Itoh M."/>
            <person name="Kato T."/>
            <person name="Kawaji H."/>
            <person name="Kawagashira N."/>
            <person name="Kawashima T."/>
            <person name="Kojima M."/>
            <person name="Kondo S."/>
            <person name="Konno H."/>
            <person name="Nakano K."/>
            <person name="Ninomiya N."/>
            <person name="Nishio T."/>
            <person name="Okada M."/>
            <person name="Plessy C."/>
            <person name="Shibata K."/>
            <person name="Shiraki T."/>
            <person name="Suzuki S."/>
            <person name="Tagami M."/>
            <person name="Waki K."/>
            <person name="Watahiki A."/>
            <person name="Okamura-Oho Y."/>
            <person name="Suzuki H."/>
            <person name="Kawai J."/>
            <person name="Hayashizaki Y."/>
        </authorList>
    </citation>
    <scope>NUCLEOTIDE SEQUENCE [LARGE SCALE MRNA]</scope>
    <source>
        <strain>C57BL/6J</strain>
        <strain>NOD</strain>
        <tissue>Kidney</tissue>
    </source>
</reference>
<reference key="3">
    <citation type="journal article" date="2004" name="Genome Res.">
        <title>The status, quality, and expansion of the NIH full-length cDNA project: the Mammalian Gene Collection (MGC).</title>
        <authorList>
            <consortium name="The MGC Project Team"/>
        </authorList>
    </citation>
    <scope>NUCLEOTIDE SEQUENCE [LARGE SCALE MRNA]</scope>
    <source>
        <strain>FVB/N</strain>
        <tissue>Colon</tissue>
    </source>
</reference>
<reference key="4">
    <citation type="journal article" date="2001" name="EMBO J.">
        <title>The tripartite motif family identifies cell compartments.</title>
        <authorList>
            <person name="Reymond A."/>
            <person name="Meroni G."/>
            <person name="Fantozzi A."/>
            <person name="Merla G."/>
            <person name="Cairo S."/>
            <person name="Luzi L."/>
            <person name="Riganelli D."/>
            <person name="Zanaria E."/>
            <person name="Messali S."/>
            <person name="Cainarca S."/>
            <person name="Guffanti A."/>
            <person name="Minucci S."/>
            <person name="Pelicci P.G."/>
            <person name="Ballabio A."/>
        </authorList>
    </citation>
    <scope>NUCLEOTIDE SEQUENCE [MRNA] OF 196-463</scope>
    <scope>TISSUE SPECIFICITY</scope>
</reference>
<reference key="5">
    <citation type="journal article" date="2002" name="J. Biol. Chem.">
        <title>TRIM8/GERP RING finger protein interacts with SOCS-1.</title>
        <authorList>
            <person name="Toniato E."/>
            <person name="Chen X.P."/>
            <person name="Losman J."/>
            <person name="Flati V."/>
            <person name="Donahue L."/>
            <person name="Rothman P."/>
        </authorList>
    </citation>
    <scope>FUNCTION</scope>
    <scope>INTERACTION WITH SOCS1</scope>
    <scope>TISSUE SPECIFICITY</scope>
    <scope>INDUCTION</scope>
    <scope>C-TERMINAL DOMAIN</scope>
</reference>
<reference key="6">
    <citation type="journal article" date="2011" name="Biochim. Biophys. Acta">
        <title>TRIM8 regulates Nanog via Hsp90beta-mediated nuclear translocation of STAT3 in embryonic stem cells.</title>
        <authorList>
            <person name="Okumura F."/>
            <person name="Okumura A.J."/>
            <person name="Matsumoto M."/>
            <person name="Nakayama K.I."/>
            <person name="Hatakeyama S."/>
        </authorList>
    </citation>
    <scope>INTERACTION WITH HSP90AB1</scope>
</reference>
<reference key="7">
    <citation type="journal article" date="2017" name="Inflammation">
        <title>Tripartite Motif 8 (TRIM8) positively regulates pro-inflammatory responses in Pseudomonas aeruginosa-induced keratitis through promoting K63-Linked polyubiquitination of TAK1 protein.</title>
        <authorList>
            <person name="Guo L."/>
            <person name="Dong W."/>
            <person name="Fu X."/>
            <person name="Lin J."/>
            <person name="Dong Z."/>
            <person name="Tan X."/>
            <person name="Zhang T."/>
        </authorList>
    </citation>
    <scope>FUNCTION</scope>
    <scope>INTERACTION WITH TAK1</scope>
    <scope>TISSUE SPECIFICITY</scope>
</reference>
<reference key="8">
    <citation type="journal article" date="2017" name="J. Immunol.">
        <title>TRIM8 Negatively Regulates TLR3/4-Mediated Innate Immune Response by Blocking TRIF-TBK1 Interaction.</title>
        <authorList>
            <person name="Ye W."/>
            <person name="Hu M.M."/>
            <person name="Lei C.Q."/>
            <person name="Zhou Q."/>
            <person name="Lin H."/>
            <person name="Sun M.S."/>
            <person name="Shu H.B."/>
        </authorList>
    </citation>
    <scope>FUNCTION</scope>
    <scope>DISRUPTION PHENOTYPE</scope>
</reference>
<reference key="9">
    <citation type="journal article" date="2019" name="Int. J. Biol. Sci.">
        <title>Tripartite Motif 8 Deficiency Relieves Hepatic Ischaemia/reperfusion Injury via TAK1-dependent Signalling Pathways.</title>
        <authorList>
            <person name="Tao Q."/>
            <person name="Tianyu W."/>
            <person name="Jiangqiao Z."/>
            <person name="Zhongbao C."/>
            <person name="Xiaoxiong M."/>
            <person name="Long Z."/>
            <person name="Jilin Z."/>
        </authorList>
    </citation>
    <scope>FUNCTION</scope>
    <scope>DISRUPTION PHENOTYPE</scope>
</reference>
<dbReference type="EC" id="2.3.2.27"/>
<dbReference type="EMBL" id="AF281047">
    <property type="protein sequence ID" value="AAG53088.1"/>
    <property type="molecule type" value="mRNA"/>
</dbReference>
<dbReference type="EMBL" id="AK052763">
    <property type="protein sequence ID" value="BAC35138.1"/>
    <property type="molecule type" value="mRNA"/>
</dbReference>
<dbReference type="EMBL" id="AK079847">
    <property type="protein sequence ID" value="BAC37764.1"/>
    <property type="molecule type" value="mRNA"/>
</dbReference>
<dbReference type="EMBL" id="AK155303">
    <property type="protein sequence ID" value="BAE33177.1"/>
    <property type="molecule type" value="mRNA"/>
</dbReference>
<dbReference type="EMBL" id="BC037065">
    <property type="protein sequence ID" value="AAH37065.1"/>
    <property type="molecule type" value="mRNA"/>
</dbReference>
<dbReference type="EMBL" id="BC152343">
    <property type="protein sequence ID" value="AAI52344.1"/>
    <property type="molecule type" value="mRNA"/>
</dbReference>
<dbReference type="EMBL" id="BC152344">
    <property type="protein sequence ID" value="AAI52345.1"/>
    <property type="molecule type" value="mRNA"/>
</dbReference>
<dbReference type="EMBL" id="AF220035">
    <property type="protein sequence ID" value="AAG53489.1"/>
    <property type="molecule type" value="mRNA"/>
</dbReference>
<dbReference type="CCDS" id="CCDS38009.1"/>
<dbReference type="RefSeq" id="NP_444330.2">
    <property type="nucleotide sequence ID" value="NM_053100.2"/>
</dbReference>
<dbReference type="SMR" id="Q99PJ2"/>
<dbReference type="BioGRID" id="220231">
    <property type="interactions" value="13"/>
</dbReference>
<dbReference type="FunCoup" id="Q99PJ2">
    <property type="interactions" value="3001"/>
</dbReference>
<dbReference type="IntAct" id="Q99PJ2">
    <property type="interactions" value="1"/>
</dbReference>
<dbReference type="STRING" id="10090.ENSMUSP00000026008"/>
<dbReference type="GlyGen" id="Q99PJ2">
    <property type="glycosylation" value="1 site"/>
</dbReference>
<dbReference type="PhosphoSitePlus" id="Q99PJ2"/>
<dbReference type="jPOST" id="Q99PJ2"/>
<dbReference type="PaxDb" id="10090-ENSMUSP00000026008"/>
<dbReference type="ProteomicsDB" id="298227"/>
<dbReference type="TopDownProteomics" id="Q99PJ2"/>
<dbReference type="Antibodypedia" id="31471">
    <property type="antibodies" value="164 antibodies from 28 providers"/>
</dbReference>
<dbReference type="DNASU" id="93679"/>
<dbReference type="Ensembl" id="ENSMUST00000026008.9">
    <property type="protein sequence ID" value="ENSMUSP00000026008.8"/>
    <property type="gene ID" value="ENSMUSG00000025034.10"/>
</dbReference>
<dbReference type="GeneID" id="93679"/>
<dbReference type="KEGG" id="mmu:93679"/>
<dbReference type="UCSC" id="uc008hts.1">
    <property type="organism name" value="mouse"/>
</dbReference>
<dbReference type="AGR" id="MGI:1933302"/>
<dbReference type="CTD" id="81603"/>
<dbReference type="MGI" id="MGI:1933302">
    <property type="gene designation" value="Trim8"/>
</dbReference>
<dbReference type="VEuPathDB" id="HostDB:ENSMUSG00000025034"/>
<dbReference type="eggNOG" id="KOG2177">
    <property type="taxonomic scope" value="Eukaryota"/>
</dbReference>
<dbReference type="GeneTree" id="ENSGT00940000157919"/>
<dbReference type="HOGENOM" id="CLU_036491_0_0_1"/>
<dbReference type="InParanoid" id="Q99PJ2"/>
<dbReference type="OMA" id="LYPCGVN"/>
<dbReference type="OrthoDB" id="1630758at2759"/>
<dbReference type="PhylomeDB" id="Q99PJ2"/>
<dbReference type="TreeFam" id="TF333491"/>
<dbReference type="UniPathway" id="UPA00143"/>
<dbReference type="BioGRID-ORCS" id="93679">
    <property type="hits" value="3 hits in 80 CRISPR screens"/>
</dbReference>
<dbReference type="ChiTaRS" id="Trim8">
    <property type="organism name" value="mouse"/>
</dbReference>
<dbReference type="PRO" id="PR:Q99PJ2"/>
<dbReference type="Proteomes" id="UP000000589">
    <property type="component" value="Chromosome 19"/>
</dbReference>
<dbReference type="RNAct" id="Q99PJ2">
    <property type="molecule type" value="protein"/>
</dbReference>
<dbReference type="Bgee" id="ENSMUSG00000025034">
    <property type="expression patterns" value="Expressed in lacrimal gland and 246 other cell types or tissues"/>
</dbReference>
<dbReference type="GO" id="GO:0005829">
    <property type="term" value="C:cytosol"/>
    <property type="evidence" value="ECO:0000314"/>
    <property type="project" value="MGI"/>
</dbReference>
<dbReference type="GO" id="GO:0005634">
    <property type="term" value="C:nucleus"/>
    <property type="evidence" value="ECO:0000314"/>
    <property type="project" value="MGI"/>
</dbReference>
<dbReference type="GO" id="GO:0016605">
    <property type="term" value="C:PML body"/>
    <property type="evidence" value="ECO:0007669"/>
    <property type="project" value="Ensembl"/>
</dbReference>
<dbReference type="GO" id="GO:0042803">
    <property type="term" value="F:protein homodimerization activity"/>
    <property type="evidence" value="ECO:0007669"/>
    <property type="project" value="Ensembl"/>
</dbReference>
<dbReference type="GO" id="GO:0003713">
    <property type="term" value="F:transcription coactivator activity"/>
    <property type="evidence" value="ECO:0007669"/>
    <property type="project" value="Ensembl"/>
</dbReference>
<dbReference type="GO" id="GO:0061630">
    <property type="term" value="F:ubiquitin protein ligase activity"/>
    <property type="evidence" value="ECO:0007669"/>
    <property type="project" value="Ensembl"/>
</dbReference>
<dbReference type="GO" id="GO:0004842">
    <property type="term" value="F:ubiquitin-protein transferase activity"/>
    <property type="evidence" value="ECO:0000303"/>
    <property type="project" value="UniProtKB"/>
</dbReference>
<dbReference type="GO" id="GO:0008270">
    <property type="term" value="F:zinc ion binding"/>
    <property type="evidence" value="ECO:0007669"/>
    <property type="project" value="UniProtKB-KW"/>
</dbReference>
<dbReference type="GO" id="GO:0007249">
    <property type="term" value="P:canonical NF-kappaB signal transduction"/>
    <property type="evidence" value="ECO:0007669"/>
    <property type="project" value="Ensembl"/>
</dbReference>
<dbReference type="GO" id="GO:0046597">
    <property type="term" value="P:host-mediated suppression of symbiont invasion"/>
    <property type="evidence" value="ECO:0000314"/>
    <property type="project" value="UniProtKB"/>
</dbReference>
<dbReference type="GO" id="GO:0045087">
    <property type="term" value="P:innate immune response"/>
    <property type="evidence" value="ECO:0000314"/>
    <property type="project" value="UniProtKB"/>
</dbReference>
<dbReference type="GO" id="GO:0032897">
    <property type="term" value="P:negative regulation of viral transcription"/>
    <property type="evidence" value="ECO:0000314"/>
    <property type="project" value="UniProtKB"/>
</dbReference>
<dbReference type="GO" id="GO:0010508">
    <property type="term" value="P:positive regulation of autophagy"/>
    <property type="evidence" value="ECO:0000250"/>
    <property type="project" value="UniProtKB"/>
</dbReference>
<dbReference type="GO" id="GO:0043123">
    <property type="term" value="P:positive regulation of canonical NF-kappaB signal transduction"/>
    <property type="evidence" value="ECO:0007669"/>
    <property type="project" value="Ensembl"/>
</dbReference>
<dbReference type="GO" id="GO:1900182">
    <property type="term" value="P:positive regulation of protein localization to nucleus"/>
    <property type="evidence" value="ECO:0000315"/>
    <property type="project" value="MGI"/>
</dbReference>
<dbReference type="GO" id="GO:0070534">
    <property type="term" value="P:protein K63-linked ubiquitination"/>
    <property type="evidence" value="ECO:0007669"/>
    <property type="project" value="Ensembl"/>
</dbReference>
<dbReference type="GO" id="GO:0019827">
    <property type="term" value="P:stem cell population maintenance"/>
    <property type="evidence" value="ECO:0000315"/>
    <property type="project" value="MGI"/>
</dbReference>
<dbReference type="GO" id="GO:0044790">
    <property type="term" value="P:suppression of viral release by host"/>
    <property type="evidence" value="ECO:0000314"/>
    <property type="project" value="UniProtKB"/>
</dbReference>
<dbReference type="CDD" id="cd19838">
    <property type="entry name" value="Bbox1_TRIM8_C-V"/>
    <property type="match status" value="1"/>
</dbReference>
<dbReference type="CDD" id="cd19763">
    <property type="entry name" value="Bbox2_TRIM8_C-V"/>
    <property type="match status" value="1"/>
</dbReference>
<dbReference type="CDD" id="cd16580">
    <property type="entry name" value="RING-HC_TRIM8_C-V"/>
    <property type="match status" value="1"/>
</dbReference>
<dbReference type="FunFam" id="3.30.40.10:FF:000290">
    <property type="entry name" value="probable E3 ubiquitin-protein ligase TRIM8"/>
    <property type="match status" value="1"/>
</dbReference>
<dbReference type="Gene3D" id="4.10.830.40">
    <property type="match status" value="1"/>
</dbReference>
<dbReference type="Gene3D" id="3.30.160.60">
    <property type="entry name" value="Classic Zinc Finger"/>
    <property type="match status" value="1"/>
</dbReference>
<dbReference type="Gene3D" id="3.30.40.10">
    <property type="entry name" value="Zinc/RING finger domain, C3HC4 (zinc finger)"/>
    <property type="match status" value="1"/>
</dbReference>
<dbReference type="InterPro" id="IPR051051">
    <property type="entry name" value="E3_ubiq-ligase_TRIM/RNF"/>
</dbReference>
<dbReference type="InterPro" id="IPR027370">
    <property type="entry name" value="Znf-RING_euk"/>
</dbReference>
<dbReference type="InterPro" id="IPR001841">
    <property type="entry name" value="Znf_RING"/>
</dbReference>
<dbReference type="InterPro" id="IPR013083">
    <property type="entry name" value="Znf_RING/FYVE/PHD"/>
</dbReference>
<dbReference type="InterPro" id="IPR017907">
    <property type="entry name" value="Znf_RING_CS"/>
</dbReference>
<dbReference type="PANTHER" id="PTHR25465">
    <property type="entry name" value="B-BOX DOMAIN CONTAINING"/>
    <property type="match status" value="1"/>
</dbReference>
<dbReference type="PANTHER" id="PTHR25465:SF19">
    <property type="entry name" value="E3 UBIQUITIN-PROTEIN LIGASE TRIM8"/>
    <property type="match status" value="1"/>
</dbReference>
<dbReference type="Pfam" id="PF13445">
    <property type="entry name" value="zf-RING_UBOX"/>
    <property type="match status" value="1"/>
</dbReference>
<dbReference type="SMART" id="SM00184">
    <property type="entry name" value="RING"/>
    <property type="match status" value="1"/>
</dbReference>
<dbReference type="SUPFAM" id="SSF57845">
    <property type="entry name" value="B-box zinc-binding domain"/>
    <property type="match status" value="1"/>
</dbReference>
<dbReference type="SUPFAM" id="SSF57850">
    <property type="entry name" value="RING/U-box"/>
    <property type="match status" value="1"/>
</dbReference>
<dbReference type="PROSITE" id="PS00518">
    <property type="entry name" value="ZF_RING_1"/>
    <property type="match status" value="1"/>
</dbReference>
<dbReference type="PROSITE" id="PS50089">
    <property type="entry name" value="ZF_RING_2"/>
    <property type="match status" value="1"/>
</dbReference>
<sequence>MAENWKNCFEEELICPICLHVFVEPVQLPCKHNFCRGCIGEAWAKDSGLVRCPECNQAYNQKPGLEKNLKLTNIVEKFNALHVEKPPTALHCVFCRRGPPLPAQKVCLRCEAPCCQSHVQTHLQQPSTARGHLLVEADDVRAWSCPQHNAYRLYHCEAEQVAVCQYCCYYSGAHQGHSVCDVEIRRNEIRKMLMKQQERLEEREQDIEDQLYKLESDKRLVEEKVSQLKEEVRLQYEKLHQLLDEDLRQTVEVLDKAQAKFCSENAAQALHLGERMQEAKKLLGSLQRLFDKTEDVGFMKNTKSVKILMDRTQTCTGSSLSPPKIGHLNSKLFLNEVAKKEKQLRKMLEGPFSTPVPFLQSVPLYPCGVNSSGAEKRKHSTAFPEASFLETSSGPVGGQYGAAGTASSEGQSGQPLGPCSSTQHLVALPGGTQPVHSSPVFPPSQYPNGSTTQQPMLPQYGGRKILVCSVDNCYCSSVANHGGHQPYPRSGHFPWTVPSQEYSHPLPPTPSVPQSLPGLAVRDWLDASQQPGHQDFYRVYGQPSTKHYVTS</sequence>
<keyword id="KW-0175">Coiled coil</keyword>
<keyword id="KW-0391">Immunity</keyword>
<keyword id="KW-0399">Innate immunity</keyword>
<keyword id="KW-0479">Metal-binding</keyword>
<keyword id="KW-1185">Reference proteome</keyword>
<keyword id="KW-0677">Repeat</keyword>
<keyword id="KW-0808">Transferase</keyword>
<keyword id="KW-0833">Ubl conjugation pathway</keyword>
<keyword id="KW-0862">Zinc</keyword>
<keyword id="KW-0863">Zinc-finger</keyword>
<accession>Q99PJ2</accession>
<accession>Q3U2G3</accession>
<accession>Q8C508</accession>
<accession>Q8C700</accession>
<accession>Q8CGI2</accession>
<accession>Q99PQ4</accession>